<dbReference type="EC" id="4.2.1.59" evidence="1"/>
<dbReference type="EMBL" id="CP000673">
    <property type="protein sequence ID" value="EDK32179.1"/>
    <property type="status" value="ALT_INIT"/>
    <property type="molecule type" value="Genomic_DNA"/>
</dbReference>
<dbReference type="SMR" id="A5N4E8"/>
<dbReference type="STRING" id="431943.CKL_0109"/>
<dbReference type="KEGG" id="ckl:CKL_0109"/>
<dbReference type="eggNOG" id="COG0764">
    <property type="taxonomic scope" value="Bacteria"/>
</dbReference>
<dbReference type="HOGENOM" id="CLU_078912_3_0_9"/>
<dbReference type="Proteomes" id="UP000002411">
    <property type="component" value="Chromosome"/>
</dbReference>
<dbReference type="GO" id="GO:0005737">
    <property type="term" value="C:cytoplasm"/>
    <property type="evidence" value="ECO:0007669"/>
    <property type="project" value="UniProtKB-SubCell"/>
</dbReference>
<dbReference type="GO" id="GO:0016020">
    <property type="term" value="C:membrane"/>
    <property type="evidence" value="ECO:0007669"/>
    <property type="project" value="GOC"/>
</dbReference>
<dbReference type="GO" id="GO:0019171">
    <property type="term" value="F:(3R)-hydroxyacyl-[acyl-carrier-protein] dehydratase activity"/>
    <property type="evidence" value="ECO:0007669"/>
    <property type="project" value="UniProtKB-EC"/>
</dbReference>
<dbReference type="GO" id="GO:0006633">
    <property type="term" value="P:fatty acid biosynthetic process"/>
    <property type="evidence" value="ECO:0007669"/>
    <property type="project" value="UniProtKB-UniRule"/>
</dbReference>
<dbReference type="GO" id="GO:0009245">
    <property type="term" value="P:lipid A biosynthetic process"/>
    <property type="evidence" value="ECO:0007669"/>
    <property type="project" value="UniProtKB-UniRule"/>
</dbReference>
<dbReference type="CDD" id="cd01288">
    <property type="entry name" value="FabZ"/>
    <property type="match status" value="1"/>
</dbReference>
<dbReference type="FunFam" id="3.10.129.10:FF:000001">
    <property type="entry name" value="3-hydroxyacyl-[acyl-carrier-protein] dehydratase FabZ"/>
    <property type="match status" value="1"/>
</dbReference>
<dbReference type="Gene3D" id="3.10.129.10">
    <property type="entry name" value="Hotdog Thioesterase"/>
    <property type="match status" value="1"/>
</dbReference>
<dbReference type="HAMAP" id="MF_00406">
    <property type="entry name" value="FabZ"/>
    <property type="match status" value="1"/>
</dbReference>
<dbReference type="InterPro" id="IPR013114">
    <property type="entry name" value="FabA_FabZ"/>
</dbReference>
<dbReference type="InterPro" id="IPR010084">
    <property type="entry name" value="FabZ"/>
</dbReference>
<dbReference type="InterPro" id="IPR029069">
    <property type="entry name" value="HotDog_dom_sf"/>
</dbReference>
<dbReference type="NCBIfam" id="TIGR01750">
    <property type="entry name" value="fabZ"/>
    <property type="match status" value="1"/>
</dbReference>
<dbReference type="NCBIfam" id="NF000582">
    <property type="entry name" value="PRK00006.1"/>
    <property type="match status" value="1"/>
</dbReference>
<dbReference type="PANTHER" id="PTHR30272">
    <property type="entry name" value="3-HYDROXYACYL-[ACYL-CARRIER-PROTEIN] DEHYDRATASE"/>
    <property type="match status" value="1"/>
</dbReference>
<dbReference type="PANTHER" id="PTHR30272:SF1">
    <property type="entry name" value="3-HYDROXYACYL-[ACYL-CARRIER-PROTEIN] DEHYDRATASE"/>
    <property type="match status" value="1"/>
</dbReference>
<dbReference type="Pfam" id="PF07977">
    <property type="entry name" value="FabA"/>
    <property type="match status" value="1"/>
</dbReference>
<dbReference type="SUPFAM" id="SSF54637">
    <property type="entry name" value="Thioesterase/thiol ester dehydrase-isomerase"/>
    <property type="match status" value="1"/>
</dbReference>
<proteinExistence type="inferred from homology"/>
<gene>
    <name evidence="1" type="primary">fabZ</name>
    <name type="ordered locus">CKL_0109</name>
</gene>
<keyword id="KW-0963">Cytoplasm</keyword>
<keyword id="KW-0441">Lipid A biosynthesis</keyword>
<keyword id="KW-0444">Lipid biosynthesis</keyword>
<keyword id="KW-0443">Lipid metabolism</keyword>
<keyword id="KW-0456">Lyase</keyword>
<keyword id="KW-1185">Reference proteome</keyword>
<comment type="function">
    <text evidence="1">Involved in unsaturated fatty acids biosynthesis. Catalyzes the dehydration of short chain beta-hydroxyacyl-ACPs and long chain saturated and unsaturated beta-hydroxyacyl-ACPs.</text>
</comment>
<comment type="catalytic activity">
    <reaction evidence="1">
        <text>a (3R)-hydroxyacyl-[ACP] = a (2E)-enoyl-[ACP] + H2O</text>
        <dbReference type="Rhea" id="RHEA:13097"/>
        <dbReference type="Rhea" id="RHEA-COMP:9925"/>
        <dbReference type="Rhea" id="RHEA-COMP:9945"/>
        <dbReference type="ChEBI" id="CHEBI:15377"/>
        <dbReference type="ChEBI" id="CHEBI:78784"/>
        <dbReference type="ChEBI" id="CHEBI:78827"/>
        <dbReference type="EC" id="4.2.1.59"/>
    </reaction>
</comment>
<comment type="subcellular location">
    <subcellularLocation>
        <location evidence="1">Cytoplasm</location>
    </subcellularLocation>
</comment>
<comment type="similarity">
    <text evidence="1">Belongs to the thioester dehydratase family. FabZ subfamily.</text>
</comment>
<comment type="sequence caution" evidence="2">
    <conflict type="erroneous initiation">
        <sequence resource="EMBL-CDS" id="EDK32179"/>
    </conflict>
</comment>
<name>FABZ_CLOK5</name>
<organism>
    <name type="scientific">Clostridium kluyveri (strain ATCC 8527 / DSM 555 / NBRC 12016 / NCIMB 10680 / K1)</name>
    <dbReference type="NCBI Taxonomy" id="431943"/>
    <lineage>
        <taxon>Bacteria</taxon>
        <taxon>Bacillati</taxon>
        <taxon>Bacillota</taxon>
        <taxon>Clostridia</taxon>
        <taxon>Eubacteriales</taxon>
        <taxon>Clostridiaceae</taxon>
        <taxon>Clostridium</taxon>
    </lineage>
</organism>
<accession>A5N4E8</accession>
<reference key="1">
    <citation type="journal article" date="2008" name="Proc. Natl. Acad. Sci. U.S.A.">
        <title>The genome of Clostridium kluyveri, a strict anaerobe with unique metabolic features.</title>
        <authorList>
            <person name="Seedorf H."/>
            <person name="Fricke W.F."/>
            <person name="Veith B."/>
            <person name="Brueggemann H."/>
            <person name="Liesegang H."/>
            <person name="Strittmatter A."/>
            <person name="Miethke M."/>
            <person name="Buckel W."/>
            <person name="Hinderberger J."/>
            <person name="Li F."/>
            <person name="Hagemeier C."/>
            <person name="Thauer R.K."/>
            <person name="Gottschalk G."/>
        </authorList>
    </citation>
    <scope>NUCLEOTIDE SEQUENCE [LARGE SCALE GENOMIC DNA]</scope>
    <source>
        <strain>ATCC 8527 / DSM 555 / NBRC 12016 / NCIMB 10680 / K1</strain>
    </source>
</reference>
<feature type="chain" id="PRO_0000340771" description="3-hydroxyacyl-[acyl-carrier-protein] dehydratase FabZ">
    <location>
        <begin position="1"/>
        <end position="144"/>
    </location>
</feature>
<feature type="active site" evidence="1">
    <location>
        <position position="49"/>
    </location>
</feature>
<protein>
    <recommendedName>
        <fullName evidence="1">3-hydroxyacyl-[acyl-carrier-protein] dehydratase FabZ</fullName>
        <ecNumber evidence="1">4.2.1.59</ecNumber>
    </recommendedName>
    <alternativeName>
        <fullName evidence="1">(3R)-hydroxymyristoyl-[acyl-carrier-protein] dehydratase</fullName>
        <shortName evidence="1">(3R)-hydroxymyristoyl-ACP dehydrase</shortName>
    </alternativeName>
    <alternativeName>
        <fullName evidence="1">Beta-hydroxyacyl-ACP dehydratase</fullName>
    </alternativeName>
</protein>
<evidence type="ECO:0000255" key="1">
    <source>
        <dbReference type="HAMAP-Rule" id="MF_00406"/>
    </source>
</evidence>
<evidence type="ECO:0000305" key="2"/>
<sequence length="144" mass="15894">MDFGVQDIKNIIPHRYPFLLIDRVSYIEPGKKVVAYKNVTSNEYFFQGHFPEMPVMPGVLIIEALAQAGAVAILSQEEFKGKIAFFGAINKAKFRRNVVPGDTLKLEVEIIKIKGSAGIGKGTAYIGEKKAAEGELMFMIGDKN</sequence>